<gene>
    <name evidence="1" type="primary">gatC</name>
    <name type="ordered locus">Ccon26_16140</name>
    <name type="ORF">CCC13826_0221</name>
</gene>
<feature type="chain" id="PRO_1000016097" description="Aspartyl/glutamyl-tRNA(Asn/Gln) amidotransferase subunit C">
    <location>
        <begin position="1"/>
        <end position="95"/>
    </location>
</feature>
<reference key="1">
    <citation type="submission" date="2007-10" db="EMBL/GenBank/DDBJ databases">
        <title>Genome sequence of Campylobacter concisus 13826 isolated from human feces.</title>
        <authorList>
            <person name="Fouts D.E."/>
            <person name="Mongodin E.F."/>
            <person name="Puiu D."/>
            <person name="Sebastian Y."/>
            <person name="Miller W.G."/>
            <person name="Mandrell R.E."/>
            <person name="On S."/>
            <person name="Nelson K.E."/>
        </authorList>
    </citation>
    <scope>NUCLEOTIDE SEQUENCE [LARGE SCALE GENOMIC DNA]</scope>
    <source>
        <strain>13826</strain>
    </source>
</reference>
<name>GATC_CAMC1</name>
<keyword id="KW-0067">ATP-binding</keyword>
<keyword id="KW-0436">Ligase</keyword>
<keyword id="KW-0547">Nucleotide-binding</keyword>
<keyword id="KW-0648">Protein biosynthesis</keyword>
<dbReference type="EC" id="6.3.5.-" evidence="1"/>
<dbReference type="EMBL" id="CP000792">
    <property type="protein sequence ID" value="EAT98320.1"/>
    <property type="molecule type" value="Genomic_DNA"/>
</dbReference>
<dbReference type="RefSeq" id="WP_002941258.1">
    <property type="nucleotide sequence ID" value="NC_009802.2"/>
</dbReference>
<dbReference type="SMR" id="A7ZFA0"/>
<dbReference type="STRING" id="360104.CCC13826_0221"/>
<dbReference type="KEGG" id="cco:CCC13826_0221"/>
<dbReference type="eggNOG" id="COG0721">
    <property type="taxonomic scope" value="Bacteria"/>
</dbReference>
<dbReference type="HOGENOM" id="CLU_105899_2_1_7"/>
<dbReference type="OrthoDB" id="9813938at2"/>
<dbReference type="Proteomes" id="UP000001121">
    <property type="component" value="Chromosome"/>
</dbReference>
<dbReference type="GO" id="GO:0050566">
    <property type="term" value="F:asparaginyl-tRNA synthase (glutamine-hydrolyzing) activity"/>
    <property type="evidence" value="ECO:0007669"/>
    <property type="project" value="RHEA"/>
</dbReference>
<dbReference type="GO" id="GO:0005524">
    <property type="term" value="F:ATP binding"/>
    <property type="evidence" value="ECO:0007669"/>
    <property type="project" value="UniProtKB-KW"/>
</dbReference>
<dbReference type="GO" id="GO:0050567">
    <property type="term" value="F:glutaminyl-tRNA synthase (glutamine-hydrolyzing) activity"/>
    <property type="evidence" value="ECO:0007669"/>
    <property type="project" value="UniProtKB-UniRule"/>
</dbReference>
<dbReference type="GO" id="GO:0070681">
    <property type="term" value="P:glutaminyl-tRNAGln biosynthesis via transamidation"/>
    <property type="evidence" value="ECO:0007669"/>
    <property type="project" value="TreeGrafter"/>
</dbReference>
<dbReference type="GO" id="GO:0006450">
    <property type="term" value="P:regulation of translational fidelity"/>
    <property type="evidence" value="ECO:0007669"/>
    <property type="project" value="InterPro"/>
</dbReference>
<dbReference type="GO" id="GO:0006412">
    <property type="term" value="P:translation"/>
    <property type="evidence" value="ECO:0007669"/>
    <property type="project" value="UniProtKB-UniRule"/>
</dbReference>
<dbReference type="Gene3D" id="1.10.20.60">
    <property type="entry name" value="Glu-tRNAGln amidotransferase C subunit, N-terminal domain"/>
    <property type="match status" value="1"/>
</dbReference>
<dbReference type="HAMAP" id="MF_00122">
    <property type="entry name" value="GatC"/>
    <property type="match status" value="1"/>
</dbReference>
<dbReference type="InterPro" id="IPR036113">
    <property type="entry name" value="Asp/Glu-ADT_sf_sub_c"/>
</dbReference>
<dbReference type="InterPro" id="IPR003837">
    <property type="entry name" value="GatC"/>
</dbReference>
<dbReference type="NCBIfam" id="TIGR00135">
    <property type="entry name" value="gatC"/>
    <property type="match status" value="1"/>
</dbReference>
<dbReference type="PANTHER" id="PTHR15004">
    <property type="entry name" value="GLUTAMYL-TRNA(GLN) AMIDOTRANSFERASE SUBUNIT C, MITOCHONDRIAL"/>
    <property type="match status" value="1"/>
</dbReference>
<dbReference type="PANTHER" id="PTHR15004:SF0">
    <property type="entry name" value="GLUTAMYL-TRNA(GLN) AMIDOTRANSFERASE SUBUNIT C, MITOCHONDRIAL"/>
    <property type="match status" value="1"/>
</dbReference>
<dbReference type="Pfam" id="PF02686">
    <property type="entry name" value="GatC"/>
    <property type="match status" value="1"/>
</dbReference>
<dbReference type="SUPFAM" id="SSF141000">
    <property type="entry name" value="Glu-tRNAGln amidotransferase C subunit"/>
    <property type="match status" value="1"/>
</dbReference>
<accession>A7ZFA0</accession>
<comment type="function">
    <text evidence="1">Allows the formation of correctly charged Asn-tRNA(Asn) or Gln-tRNA(Gln) through the transamidation of misacylated Asp-tRNA(Asn) or Glu-tRNA(Gln) in organisms which lack either or both of asparaginyl-tRNA or glutaminyl-tRNA synthetases. The reaction takes place in the presence of glutamine and ATP through an activated phospho-Asp-tRNA(Asn) or phospho-Glu-tRNA(Gln).</text>
</comment>
<comment type="catalytic activity">
    <reaction evidence="1">
        <text>L-glutamyl-tRNA(Gln) + L-glutamine + ATP + H2O = L-glutaminyl-tRNA(Gln) + L-glutamate + ADP + phosphate + H(+)</text>
        <dbReference type="Rhea" id="RHEA:17521"/>
        <dbReference type="Rhea" id="RHEA-COMP:9681"/>
        <dbReference type="Rhea" id="RHEA-COMP:9684"/>
        <dbReference type="ChEBI" id="CHEBI:15377"/>
        <dbReference type="ChEBI" id="CHEBI:15378"/>
        <dbReference type="ChEBI" id="CHEBI:29985"/>
        <dbReference type="ChEBI" id="CHEBI:30616"/>
        <dbReference type="ChEBI" id="CHEBI:43474"/>
        <dbReference type="ChEBI" id="CHEBI:58359"/>
        <dbReference type="ChEBI" id="CHEBI:78520"/>
        <dbReference type="ChEBI" id="CHEBI:78521"/>
        <dbReference type="ChEBI" id="CHEBI:456216"/>
    </reaction>
</comment>
<comment type="catalytic activity">
    <reaction evidence="1">
        <text>L-aspartyl-tRNA(Asn) + L-glutamine + ATP + H2O = L-asparaginyl-tRNA(Asn) + L-glutamate + ADP + phosphate + 2 H(+)</text>
        <dbReference type="Rhea" id="RHEA:14513"/>
        <dbReference type="Rhea" id="RHEA-COMP:9674"/>
        <dbReference type="Rhea" id="RHEA-COMP:9677"/>
        <dbReference type="ChEBI" id="CHEBI:15377"/>
        <dbReference type="ChEBI" id="CHEBI:15378"/>
        <dbReference type="ChEBI" id="CHEBI:29985"/>
        <dbReference type="ChEBI" id="CHEBI:30616"/>
        <dbReference type="ChEBI" id="CHEBI:43474"/>
        <dbReference type="ChEBI" id="CHEBI:58359"/>
        <dbReference type="ChEBI" id="CHEBI:78515"/>
        <dbReference type="ChEBI" id="CHEBI:78516"/>
        <dbReference type="ChEBI" id="CHEBI:456216"/>
    </reaction>
</comment>
<comment type="subunit">
    <text evidence="1">Heterotrimer of A, B and C subunits.</text>
</comment>
<comment type="similarity">
    <text evidence="1">Belongs to the GatC family.</text>
</comment>
<evidence type="ECO:0000255" key="1">
    <source>
        <dbReference type="HAMAP-Rule" id="MF_00122"/>
    </source>
</evidence>
<proteinExistence type="inferred from homology"/>
<organism>
    <name type="scientific">Campylobacter concisus (strain 13826)</name>
    <dbReference type="NCBI Taxonomy" id="360104"/>
    <lineage>
        <taxon>Bacteria</taxon>
        <taxon>Pseudomonadati</taxon>
        <taxon>Campylobacterota</taxon>
        <taxon>Epsilonproteobacteria</taxon>
        <taxon>Campylobacterales</taxon>
        <taxon>Campylobacteraceae</taxon>
        <taxon>Campylobacter</taxon>
    </lineage>
</organism>
<protein>
    <recommendedName>
        <fullName evidence="1">Aspartyl/glutamyl-tRNA(Asn/Gln) amidotransferase subunit C</fullName>
        <shortName evidence="1">Asp/Glu-ADT subunit C</shortName>
        <ecNumber evidence="1">6.3.5.-</ecNumber>
    </recommendedName>
</protein>
<sequence>MQIDDTLLNKLEKLSALQINDEKREEIKKQLSEIVSFVDVLNELDLSSDEAVVSSIKGGTPLREDEPHLSNVVDEILKHAPSREGHFFAVPKIIE</sequence>